<comment type="function">
    <text evidence="8 9">DNA ligase involved in DNA non-homologous end joining (NHEJ); required for double-strand break (DSB) repair.</text>
</comment>
<comment type="catalytic activity">
    <reaction evidence="4 9">
        <text>ATP + (deoxyribonucleotide)n-3'-hydroxyl + 5'-phospho-(deoxyribonucleotide)m = (deoxyribonucleotide)n+m + AMP + diphosphate.</text>
        <dbReference type="EC" id="6.5.1.1"/>
    </reaction>
</comment>
<comment type="cofactor">
    <cofactor evidence="1">
        <name>Mg(2+)</name>
        <dbReference type="ChEBI" id="CHEBI:18420"/>
    </cofactor>
</comment>
<comment type="subunit">
    <text evidence="5 6 7 10">Component of the DNA ligase IV complex, composed of DNL4, LIF1 and NEJ1 (PubMed:17567543). Interacts (via BRCT domain) with LIF1 (PubMed:16388993, PubMed:17567543, PubMed:9670033). Interacts with NEJ1 (PubMed:17567543). Interacts with POL4 in the DNL4-LIF1 complex (PubMed:12235149).</text>
</comment>
<comment type="interaction">
    <interactant intactId="EBI-5983">
        <id>Q08387</id>
    </interactant>
    <interactant intactId="EBI-23865">
        <id>P53150</id>
        <label>LIF1</label>
    </interactant>
    <organismsDiffer>false</organismsDiffer>
    <experiments>3</experiments>
</comment>
<comment type="subcellular location">
    <subcellularLocation>
        <location evidence="12">Nucleus</location>
    </subcellularLocation>
</comment>
<comment type="disruption phenotype">
    <text evidence="9">Delayed meiosis I; sporulation results in an increased proportion of tetrads with only three viable spores (PubMed:9271115). Very mildly sensitive to ultraviolet (UV) light and methyl methanesulfonate (MMS) (PubMed:9271115).</text>
</comment>
<comment type="similarity">
    <text evidence="11">Belongs to the ATP-dependent DNA ligase family.</text>
</comment>
<comment type="sequence caution" evidence="11">
    <conflict type="frameshift">
        <sequence resource="EMBL-CDS" id="AAC49484"/>
    </conflict>
    <text>Produces 2 separate ORFs.</text>
</comment>
<comment type="sequence caution" evidence="11">
    <conflict type="frameshift">
        <sequence resource="EMBL-CDS" id="AAC49485"/>
    </conflict>
    <text>Produces 2 separate ORFs.</text>
</comment>
<protein>
    <recommendedName>
        <fullName>DNA ligase 4</fullName>
        <ecNumber evidence="4 9">6.5.1.1</ecNumber>
    </recommendedName>
    <alternativeName>
        <fullName>DNA ligase II</fullName>
    </alternativeName>
    <alternativeName>
        <fullName>DNA ligase IV</fullName>
    </alternativeName>
    <alternativeName>
        <fullName>Polydeoxyribonucleotide synthase [ATP] 4</fullName>
    </alternativeName>
</protein>
<gene>
    <name type="primary">DNL4</name>
    <name type="synonym">LIG4</name>
    <name type="ordered locus">YOR005C</name>
    <name type="ORF">UND407</name>
    <name type="ORF">UNE452</name>
</gene>
<evidence type="ECO:0000250" key="1">
    <source>
        <dbReference type="UniProtKB" id="P49917"/>
    </source>
</evidence>
<evidence type="ECO:0000255" key="2"/>
<evidence type="ECO:0000255" key="3">
    <source>
        <dbReference type="PROSITE-ProRule" id="PRU00033"/>
    </source>
</evidence>
<evidence type="ECO:0000255" key="4">
    <source>
        <dbReference type="PROSITE-ProRule" id="PRU10135"/>
    </source>
</evidence>
<evidence type="ECO:0000269" key="5">
    <source>
    </source>
</evidence>
<evidence type="ECO:0000269" key="6">
    <source>
    </source>
</evidence>
<evidence type="ECO:0000269" key="7">
    <source>
    </source>
</evidence>
<evidence type="ECO:0000269" key="8">
    <source>
    </source>
</evidence>
<evidence type="ECO:0000269" key="9">
    <source>
    </source>
</evidence>
<evidence type="ECO:0000269" key="10">
    <source>
    </source>
</evidence>
<evidence type="ECO:0000305" key="11"/>
<evidence type="ECO:0000305" key="12">
    <source>
    </source>
</evidence>
<accession>Q08387</accession>
<accession>D6W271</accession>
<accession>Q02913</accession>
<accession>Q02914</accession>
<reference key="1">
    <citation type="journal article" date="1996" name="Yeast">
        <title>The sequence of a 30 kb fragment on the left arm of chromosome XV from Saccharomyces cerevisiae reveals 15 open reading frames, five of which correspond to previously identified genes.</title>
        <authorList>
            <person name="Sterky F."/>
            <person name="Holmberg A."/>
            <person name="Pettersson B."/>
            <person name="Uhlen M."/>
        </authorList>
    </citation>
    <scope>NUCLEOTIDE SEQUENCE [GENOMIC DNA]</scope>
</reference>
<reference key="2">
    <citation type="journal article" date="1997" name="Nature">
        <title>The nucleotide sequence of Saccharomyces cerevisiae chromosome XV.</title>
        <authorList>
            <person name="Dujon B."/>
            <person name="Albermann K."/>
            <person name="Aldea M."/>
            <person name="Alexandraki D."/>
            <person name="Ansorge W."/>
            <person name="Arino J."/>
            <person name="Benes V."/>
            <person name="Bohn C."/>
            <person name="Bolotin-Fukuhara M."/>
            <person name="Bordonne R."/>
            <person name="Boyer J."/>
            <person name="Camasses A."/>
            <person name="Casamayor A."/>
            <person name="Casas C."/>
            <person name="Cheret G."/>
            <person name="Cziepluch C."/>
            <person name="Daignan-Fornier B."/>
            <person name="Dang V.-D."/>
            <person name="de Haan M."/>
            <person name="Delius H."/>
            <person name="Durand P."/>
            <person name="Fairhead C."/>
            <person name="Feldmann H."/>
            <person name="Gaillon L."/>
            <person name="Galisson F."/>
            <person name="Gamo F.-J."/>
            <person name="Gancedo C."/>
            <person name="Goffeau A."/>
            <person name="Goulding S.E."/>
            <person name="Grivell L.A."/>
            <person name="Habbig B."/>
            <person name="Hand N.J."/>
            <person name="Hani J."/>
            <person name="Hattenhorst U."/>
            <person name="Hebling U."/>
            <person name="Hernando Y."/>
            <person name="Herrero E."/>
            <person name="Heumann K."/>
            <person name="Hiesel R."/>
            <person name="Hilger F."/>
            <person name="Hofmann B."/>
            <person name="Hollenberg C.P."/>
            <person name="Hughes B."/>
            <person name="Jauniaux J.-C."/>
            <person name="Kalogeropoulos A."/>
            <person name="Katsoulou C."/>
            <person name="Kordes E."/>
            <person name="Lafuente M.J."/>
            <person name="Landt O."/>
            <person name="Louis E.J."/>
            <person name="Maarse A.C."/>
            <person name="Madania A."/>
            <person name="Mannhaupt G."/>
            <person name="Marck C."/>
            <person name="Martin R.P."/>
            <person name="Mewes H.-W."/>
            <person name="Michaux G."/>
            <person name="Paces V."/>
            <person name="Parle-McDermott A.G."/>
            <person name="Pearson B.M."/>
            <person name="Perrin A."/>
            <person name="Pettersson B."/>
            <person name="Poch O."/>
            <person name="Pohl T.M."/>
            <person name="Poirey R."/>
            <person name="Portetelle D."/>
            <person name="Pujol A."/>
            <person name="Purnelle B."/>
            <person name="Ramezani Rad M."/>
            <person name="Rechmann S."/>
            <person name="Schwager C."/>
            <person name="Schweizer M."/>
            <person name="Sor F."/>
            <person name="Sterky F."/>
            <person name="Tarassov I.A."/>
            <person name="Teodoru C."/>
            <person name="Tettelin H."/>
            <person name="Thierry A."/>
            <person name="Tobiasch E."/>
            <person name="Tzermia M."/>
            <person name="Uhlen M."/>
            <person name="Unseld M."/>
            <person name="Valens M."/>
            <person name="Vandenbol M."/>
            <person name="Vetter I."/>
            <person name="Vlcek C."/>
            <person name="Voet M."/>
            <person name="Volckaert G."/>
            <person name="Voss H."/>
            <person name="Wambutt R."/>
            <person name="Wedler H."/>
            <person name="Wiemann S."/>
            <person name="Winsor B."/>
            <person name="Wolfe K.H."/>
            <person name="Zollner A."/>
            <person name="Zumstein E."/>
            <person name="Kleine K."/>
        </authorList>
    </citation>
    <scope>NUCLEOTIDE SEQUENCE [LARGE SCALE GENOMIC DNA]</scope>
    <source>
        <strain>ATCC 204508 / S288c</strain>
    </source>
</reference>
<reference key="3">
    <citation type="journal article" date="2014" name="G3 (Bethesda)">
        <title>The reference genome sequence of Saccharomyces cerevisiae: Then and now.</title>
        <authorList>
            <person name="Engel S.R."/>
            <person name="Dietrich F.S."/>
            <person name="Fisk D.G."/>
            <person name="Binkley G."/>
            <person name="Balakrishnan R."/>
            <person name="Costanzo M.C."/>
            <person name="Dwight S.S."/>
            <person name="Hitz B.C."/>
            <person name="Karra K."/>
            <person name="Nash R.S."/>
            <person name="Weng S."/>
            <person name="Wong E.D."/>
            <person name="Lloyd P."/>
            <person name="Skrzypek M.S."/>
            <person name="Miyasato S.R."/>
            <person name="Simison M."/>
            <person name="Cherry J.M."/>
        </authorList>
    </citation>
    <scope>GENOME REANNOTATION</scope>
    <source>
        <strain>ATCC 204508 / S288c</strain>
    </source>
</reference>
<reference key="4">
    <citation type="journal article" date="1997" name="Genes Dev.">
        <title>A newly identified DNA ligase of Saccharomyces cerevisiae involved in RAD52-independent repair of DNA double-strand breaks.</title>
        <authorList>
            <person name="Schaer P."/>
            <person name="Herrmann G."/>
            <person name="Daly G."/>
            <person name="Lindahl T."/>
        </authorList>
    </citation>
    <scope>FUNCTION</scope>
    <scope>CATALYTIC ACTIVITY</scope>
    <scope>SUBCELLULAR LOCATION</scope>
    <scope>DISRUPTION PHENOTYPE</scope>
</reference>
<reference key="5">
    <citation type="journal article" date="1997" name="Nucleic Acids Res.">
        <title>Two distinct DNA ligase activities in mitotic extracts of the yeast Saccharomyces cerevisiae.</title>
        <authorList>
            <person name="Ramos W."/>
            <person name="Tappe N."/>
            <person name="Talamantez J."/>
            <person name="Friedberg E.C."/>
            <person name="Tomkinson A.E."/>
        </authorList>
    </citation>
    <scope>CHARACTERIZATION</scope>
</reference>
<reference key="6">
    <citation type="journal article" date="1998" name="EMBO J.">
        <title>Saccharomyces cerevisiae LIF1: a function involved in DNA double-strand break repair related to mammalian XRCC4.</title>
        <authorList>
            <person name="Herrmann G."/>
            <person name="Lindahl T."/>
            <person name="Schar P."/>
        </authorList>
    </citation>
    <scope>INTERACTION WITH LIF1</scope>
</reference>
<reference key="7">
    <citation type="journal article" date="2002" name="J. Biol. Chem.">
        <title>A physical and functional interaction between yeast Pol4 and Dnl4-Lif1 links DNA synthesis and ligation in nonhomologous end joining.</title>
        <authorList>
            <person name="Tseng H.-M."/>
            <person name="Tomkinson A.E."/>
        </authorList>
    </citation>
    <scope>INTERACTION WITH POL4</scope>
</reference>
<reference key="8">
    <citation type="journal article" date="2006" name="DNA Repair">
        <title>Structure of an Xrcc4-DNA ligase IV yeast ortholog complex reveals a novel BRCT interaction mode.</title>
        <authorList>
            <person name="Dore A.S."/>
            <person name="Furnham N."/>
            <person name="Davies O.R."/>
            <person name="Sibanda B.L."/>
            <person name="Chirgadze D.Y."/>
            <person name="Jackson S.P."/>
            <person name="Pellegrini L."/>
            <person name="Blundell T.L."/>
        </authorList>
    </citation>
    <scope>X-RAY CRYSTALLOGRAPHY (3.92 ANGSTROMS) OF 681-944 IN COMPLEX WITH LIF1</scope>
</reference>
<reference key="9">
    <citation type="journal article" date="2007" name="DNA Repair">
        <title>Modes of interaction among yeast Nej1, Lif1 and Dnl4 proteins and comparison to human XLF, XRCC4 and Lig4.</title>
        <authorList>
            <person name="Deshpande R.A."/>
            <person name="Wilson T.E."/>
        </authorList>
    </citation>
    <scope>INTERACTION WITH LIF1 AND NEJ1</scope>
</reference>
<sequence length="944" mass="108515">MISALDSIPEPQNFAPSPDFKWLCEELFVKIHEVQINGTAGTGKSRSFKYYEIISNFVEMWRKTVGNNIYPALVLALPYRDRRIYNIKDYVLIRTICSYLKLPKNSATEQRLKDWKQRVGKGGNLSSLLVEEIAKRRAEPSSKAITIDNVNHYLDSLSGDRFASGRGFKSLVKSKPFLHCVENMSFVELKYFFDIVLKNRVIGGQEHKLLNCWHPDAQDYLSVISDLKVVTSKLYDPKVRLKDDDLSIKVGFAFAPQLAKKVNLSYEKICRTLHDDFLVEEKMDGERIQVHYMNYGESIKFFSRRGIDYTYLYGASLSSGTISQHLRFTDSVKECVLDGEMVTFDAKRRVILPFGLVKGSAKEALSFNSINNVDFHPLYMVFDLLYLNGTSLTPLPLHQRKQYLNSILSPLKNIVEIVRSSRCYGVESIKKSLEVAISLGSEGVVLKYYNSSYNVASRNNNWIKVKPEYLEEFGENLDLIVIGRDSGKKDSFMLGLLVLDEEEYKKHQGDSSEIVDHSSQEKHIQNSRRRVKKILSFCSIANGISQEEFKEIDRKTRGHWKRTSEVAPPASILEFGSKIPAEWIDPSESIVLEIKSRSLDNTETNMQKYATNCTLYGGYCKRIRYDKEWTDCYTLNDLYESRTVKSNPSYQAERSQLGLIRKKRKRVLISDSFHQNRKQLPISNIFAGLLFYVLSDYVTEDTGIRITRAELEKTIVEHGGKLIYNVILKRHSIGDVRLISCKTTTECKALIDRGYDILHPNWVLDCIAYKRLILIEPNYCFNVSQKMRAVAEKRVDCLGDSFENDISETKLSSLYKSQLSLPPMGELEIDSEVRRFPLFLFSNRIAYVPRRKISTEDDIIEMKIKLFGGKITDQQSLCNLIIIPYTDPILRKDCMNEVHEKIKEQIKASDTIPKIARVVAPEWVDHSINENCQVPEEDFPVVNY</sequence>
<feature type="chain" id="PRO_0000059582" description="DNA ligase 4">
    <location>
        <begin position="1"/>
        <end position="944"/>
    </location>
</feature>
<feature type="domain" description="BRCT 1" evidence="3">
    <location>
        <begin position="681"/>
        <end position="780"/>
    </location>
</feature>
<feature type="domain" description="BRCT 2" evidence="3">
    <location>
        <begin position="836"/>
        <end position="941"/>
    </location>
</feature>
<feature type="active site" description="N6-AMP-lysine intermediate" evidence="4">
    <location>
        <position position="282"/>
    </location>
</feature>
<feature type="binding site" evidence="1">
    <location>
        <position position="280"/>
    </location>
    <ligand>
        <name>ATP</name>
        <dbReference type="ChEBI" id="CHEBI:30616"/>
    </ligand>
</feature>
<feature type="binding site" evidence="1">
    <location>
        <position position="282"/>
    </location>
    <ligand>
        <name>ATP</name>
        <dbReference type="ChEBI" id="CHEBI:30616"/>
    </ligand>
</feature>
<feature type="binding site" evidence="1">
    <location>
        <position position="287"/>
    </location>
    <ligand>
        <name>ATP</name>
        <dbReference type="ChEBI" id="CHEBI:30616"/>
    </ligand>
</feature>
<feature type="binding site" evidence="1">
    <location>
        <position position="340"/>
    </location>
    <ligand>
        <name>ATP</name>
        <dbReference type="ChEBI" id="CHEBI:30616"/>
    </ligand>
</feature>
<feature type="binding site" evidence="2">
    <location>
        <position position="340"/>
    </location>
    <ligand>
        <name>Mg(2+)</name>
        <dbReference type="ChEBI" id="CHEBI:18420"/>
        <label>1</label>
    </ligand>
</feature>
<feature type="binding site" evidence="1">
    <location>
        <position position="382"/>
    </location>
    <ligand>
        <name>ATP</name>
        <dbReference type="ChEBI" id="CHEBI:30616"/>
    </ligand>
</feature>
<feature type="binding site" evidence="1">
    <location>
        <position position="442"/>
    </location>
    <ligand>
        <name>ATP</name>
        <dbReference type="ChEBI" id="CHEBI:30616"/>
    </ligand>
</feature>
<feature type="binding site" evidence="2">
    <location>
        <position position="442"/>
    </location>
    <ligand>
        <name>Mg(2+)</name>
        <dbReference type="ChEBI" id="CHEBI:18420"/>
        <label>2</label>
    </ligand>
</feature>
<feature type="binding site" evidence="1">
    <location>
        <position position="447"/>
    </location>
    <ligand>
        <name>ATP</name>
        <dbReference type="ChEBI" id="CHEBI:30616"/>
    </ligand>
</feature>
<feature type="binding site" evidence="1">
    <location>
        <position position="464"/>
    </location>
    <ligand>
        <name>ATP</name>
        <dbReference type="ChEBI" id="CHEBI:30616"/>
    </ligand>
</feature>
<feature type="binding site" evidence="1">
    <location>
        <position position="466"/>
    </location>
    <ligand>
        <name>ATP</name>
        <dbReference type="ChEBI" id="CHEBI:30616"/>
    </ligand>
</feature>
<dbReference type="EC" id="6.5.1.1" evidence="4 9"/>
<dbReference type="EMBL" id="U43491">
    <property type="protein sequence ID" value="AAC49485.1"/>
    <property type="status" value="ALT_FRAME"/>
    <property type="molecule type" value="Genomic_DNA"/>
</dbReference>
<dbReference type="EMBL" id="U43491">
    <property type="protein sequence ID" value="AAC49484.1"/>
    <property type="status" value="ALT_FRAME"/>
    <property type="molecule type" value="Genomic_DNA"/>
</dbReference>
<dbReference type="EMBL" id="Z74913">
    <property type="protein sequence ID" value="CAA99193.1"/>
    <property type="molecule type" value="Genomic_DNA"/>
</dbReference>
<dbReference type="EMBL" id="BK006948">
    <property type="protein sequence ID" value="DAA10787.1"/>
    <property type="molecule type" value="Genomic_DNA"/>
</dbReference>
<dbReference type="PIR" id="S66870">
    <property type="entry name" value="S66870"/>
</dbReference>
<dbReference type="RefSeq" id="NP_014647.1">
    <property type="nucleotide sequence ID" value="NM_001183424.1"/>
</dbReference>
<dbReference type="PDB" id="1Z56">
    <property type="method" value="X-ray"/>
    <property type="resolution" value="3.92 A"/>
    <property type="chains" value="C=681-943"/>
</dbReference>
<dbReference type="PDBsum" id="1Z56"/>
<dbReference type="SMR" id="Q08387"/>
<dbReference type="BioGRID" id="34408">
    <property type="interactions" value="259"/>
</dbReference>
<dbReference type="ComplexPortal" id="CPX-1665">
    <property type="entry name" value="DNA ligase IV complex"/>
</dbReference>
<dbReference type="DIP" id="DIP-5801N"/>
<dbReference type="FunCoup" id="Q08387">
    <property type="interactions" value="680"/>
</dbReference>
<dbReference type="IntAct" id="Q08387">
    <property type="interactions" value="22"/>
</dbReference>
<dbReference type="STRING" id="4932.YOR005C"/>
<dbReference type="iPTMnet" id="Q08387"/>
<dbReference type="PaxDb" id="4932-YOR005C"/>
<dbReference type="PeptideAtlas" id="Q08387"/>
<dbReference type="EnsemblFungi" id="YOR005C_mRNA">
    <property type="protein sequence ID" value="YOR005C"/>
    <property type="gene ID" value="YOR005C"/>
</dbReference>
<dbReference type="GeneID" id="854166"/>
<dbReference type="KEGG" id="sce:YOR005C"/>
<dbReference type="AGR" id="SGD:S000005531"/>
<dbReference type="SGD" id="S000005531">
    <property type="gene designation" value="DNL4"/>
</dbReference>
<dbReference type="VEuPathDB" id="FungiDB:YOR005C"/>
<dbReference type="eggNOG" id="KOG0966">
    <property type="taxonomic scope" value="Eukaryota"/>
</dbReference>
<dbReference type="GeneTree" id="ENSGT00860000133881"/>
<dbReference type="HOGENOM" id="CLU_004844_1_1_1"/>
<dbReference type="InParanoid" id="Q08387"/>
<dbReference type="OMA" id="EGIMIKH"/>
<dbReference type="OrthoDB" id="151490at2759"/>
<dbReference type="BioCyc" id="YEAST:G3O-33555-MONOMER"/>
<dbReference type="BRENDA" id="6.5.1.1">
    <property type="organism ID" value="984"/>
</dbReference>
<dbReference type="BioGRID-ORCS" id="854166">
    <property type="hits" value="0 hits in 10 CRISPR screens"/>
</dbReference>
<dbReference type="EvolutionaryTrace" id="Q08387"/>
<dbReference type="PRO" id="PR:Q08387"/>
<dbReference type="Proteomes" id="UP000002311">
    <property type="component" value="Chromosome XV"/>
</dbReference>
<dbReference type="RNAct" id="Q08387">
    <property type="molecule type" value="protein"/>
</dbReference>
<dbReference type="GO" id="GO:0032807">
    <property type="term" value="C:DNA ligase IV complex"/>
    <property type="evidence" value="ECO:0000353"/>
    <property type="project" value="ComplexPortal"/>
</dbReference>
<dbReference type="GO" id="GO:0005634">
    <property type="term" value="C:nucleus"/>
    <property type="evidence" value="ECO:0000314"/>
    <property type="project" value="ComplexPortal"/>
</dbReference>
<dbReference type="GO" id="GO:0005524">
    <property type="term" value="F:ATP binding"/>
    <property type="evidence" value="ECO:0000318"/>
    <property type="project" value="GO_Central"/>
</dbReference>
<dbReference type="GO" id="GO:0003677">
    <property type="term" value="F:DNA binding"/>
    <property type="evidence" value="ECO:0000318"/>
    <property type="project" value="GO_Central"/>
</dbReference>
<dbReference type="GO" id="GO:0003910">
    <property type="term" value="F:DNA ligase (ATP) activity"/>
    <property type="evidence" value="ECO:0000314"/>
    <property type="project" value="SGD"/>
</dbReference>
<dbReference type="GO" id="GO:0046872">
    <property type="term" value="F:metal ion binding"/>
    <property type="evidence" value="ECO:0007669"/>
    <property type="project" value="UniProtKB-KW"/>
</dbReference>
<dbReference type="GO" id="GO:0051301">
    <property type="term" value="P:cell division"/>
    <property type="evidence" value="ECO:0007669"/>
    <property type="project" value="UniProtKB-KW"/>
</dbReference>
<dbReference type="GO" id="GO:0071897">
    <property type="term" value="P:DNA biosynthetic process"/>
    <property type="evidence" value="ECO:0007669"/>
    <property type="project" value="InterPro"/>
</dbReference>
<dbReference type="GO" id="GO:0006310">
    <property type="term" value="P:DNA recombination"/>
    <property type="evidence" value="ECO:0007669"/>
    <property type="project" value="UniProtKB-KW"/>
</dbReference>
<dbReference type="GO" id="GO:0097680">
    <property type="term" value="P:double-strand break repair via classical nonhomologous end joining"/>
    <property type="evidence" value="ECO:0000315"/>
    <property type="project" value="UniProtKB"/>
</dbReference>
<dbReference type="GO" id="GO:0006303">
    <property type="term" value="P:double-strand break repair via nonhomologous end joining"/>
    <property type="evidence" value="ECO:0000314"/>
    <property type="project" value="ComplexPortal"/>
</dbReference>
<dbReference type="GO" id="GO:0043007">
    <property type="term" value="P:maintenance of rDNA"/>
    <property type="evidence" value="ECO:0000315"/>
    <property type="project" value="SGD"/>
</dbReference>
<dbReference type="GO" id="GO:0006297">
    <property type="term" value="P:nucleotide-excision repair, DNA gap filling"/>
    <property type="evidence" value="ECO:0000318"/>
    <property type="project" value="GO_Central"/>
</dbReference>
<dbReference type="CDD" id="cd07903">
    <property type="entry name" value="Adenylation_DNA_ligase_IV"/>
    <property type="match status" value="1"/>
</dbReference>
<dbReference type="CDD" id="cd17722">
    <property type="entry name" value="BRCT_DNA_ligase_IV_rpt1"/>
    <property type="match status" value="1"/>
</dbReference>
<dbReference type="CDD" id="cd17744">
    <property type="entry name" value="BRCT_MDC1_rpt1"/>
    <property type="match status" value="1"/>
</dbReference>
<dbReference type="CDD" id="cd07968">
    <property type="entry name" value="OBF_DNA_ligase_IV"/>
    <property type="match status" value="1"/>
</dbReference>
<dbReference type="FunFam" id="1.10.3260.10:FF:000011">
    <property type="entry name" value="DNA ligase"/>
    <property type="match status" value="1"/>
</dbReference>
<dbReference type="FunFam" id="2.40.50.140:FF:000381">
    <property type="entry name" value="DNA ligase"/>
    <property type="match status" value="1"/>
</dbReference>
<dbReference type="FunFam" id="3.30.470.30:FF:000021">
    <property type="entry name" value="DNA ligase"/>
    <property type="match status" value="1"/>
</dbReference>
<dbReference type="Gene3D" id="3.40.50.10190">
    <property type="entry name" value="BRCT domain"/>
    <property type="match status" value="2"/>
</dbReference>
<dbReference type="Gene3D" id="1.10.3260.10">
    <property type="entry name" value="DNA ligase, ATP-dependent, N-terminal domain"/>
    <property type="match status" value="1"/>
</dbReference>
<dbReference type="Gene3D" id="3.30.470.30">
    <property type="entry name" value="DNA ligase/mRNA capping enzyme"/>
    <property type="match status" value="1"/>
</dbReference>
<dbReference type="Gene3D" id="2.40.50.140">
    <property type="entry name" value="Nucleic acid-binding proteins"/>
    <property type="match status" value="1"/>
</dbReference>
<dbReference type="InterPro" id="IPR044125">
    <property type="entry name" value="Adenylation_DNA_ligase_IV"/>
</dbReference>
<dbReference type="InterPro" id="IPR001357">
    <property type="entry name" value="BRCT_dom"/>
</dbReference>
<dbReference type="InterPro" id="IPR036420">
    <property type="entry name" value="BRCT_dom_sf"/>
</dbReference>
<dbReference type="InterPro" id="IPR000977">
    <property type="entry name" value="DNA_ligase_ATP-dep"/>
</dbReference>
<dbReference type="InterPro" id="IPR012310">
    <property type="entry name" value="DNA_ligase_ATP-dep_cent"/>
</dbReference>
<dbReference type="InterPro" id="IPR016059">
    <property type="entry name" value="DNA_ligase_ATP-dep_CS"/>
</dbReference>
<dbReference type="InterPro" id="IPR012308">
    <property type="entry name" value="DNA_ligase_ATP-dep_N"/>
</dbReference>
<dbReference type="InterPro" id="IPR036599">
    <property type="entry name" value="DNA_ligase_N_sf"/>
</dbReference>
<dbReference type="InterPro" id="IPR029710">
    <property type="entry name" value="LIG4"/>
</dbReference>
<dbReference type="InterPro" id="IPR012340">
    <property type="entry name" value="NA-bd_OB-fold"/>
</dbReference>
<dbReference type="NCBIfam" id="TIGR00574">
    <property type="entry name" value="dnl1"/>
    <property type="match status" value="1"/>
</dbReference>
<dbReference type="PANTHER" id="PTHR45997">
    <property type="entry name" value="DNA LIGASE 4"/>
    <property type="match status" value="1"/>
</dbReference>
<dbReference type="PANTHER" id="PTHR45997:SF1">
    <property type="entry name" value="DNA LIGASE 4"/>
    <property type="match status" value="1"/>
</dbReference>
<dbReference type="Pfam" id="PF00533">
    <property type="entry name" value="BRCT"/>
    <property type="match status" value="1"/>
</dbReference>
<dbReference type="Pfam" id="PF16589">
    <property type="entry name" value="BRCT_2"/>
    <property type="match status" value="1"/>
</dbReference>
<dbReference type="Pfam" id="PF01068">
    <property type="entry name" value="DNA_ligase_A_M"/>
    <property type="match status" value="1"/>
</dbReference>
<dbReference type="Pfam" id="PF04675">
    <property type="entry name" value="DNA_ligase_A_N"/>
    <property type="match status" value="1"/>
</dbReference>
<dbReference type="SMART" id="SM00292">
    <property type="entry name" value="BRCT"/>
    <property type="match status" value="1"/>
</dbReference>
<dbReference type="SUPFAM" id="SSF52113">
    <property type="entry name" value="BRCT domain"/>
    <property type="match status" value="2"/>
</dbReference>
<dbReference type="SUPFAM" id="SSF56091">
    <property type="entry name" value="DNA ligase/mRNA capping enzyme, catalytic domain"/>
    <property type="match status" value="1"/>
</dbReference>
<dbReference type="SUPFAM" id="SSF50249">
    <property type="entry name" value="Nucleic acid-binding proteins"/>
    <property type="match status" value="1"/>
</dbReference>
<dbReference type="PROSITE" id="PS50172">
    <property type="entry name" value="BRCT"/>
    <property type="match status" value="2"/>
</dbReference>
<dbReference type="PROSITE" id="PS00697">
    <property type="entry name" value="DNA_LIGASE_A1"/>
    <property type="match status" value="1"/>
</dbReference>
<dbReference type="PROSITE" id="PS00333">
    <property type="entry name" value="DNA_LIGASE_A2"/>
    <property type="match status" value="1"/>
</dbReference>
<dbReference type="PROSITE" id="PS50160">
    <property type="entry name" value="DNA_LIGASE_A3"/>
    <property type="match status" value="1"/>
</dbReference>
<name>DNLI4_YEAST</name>
<keyword id="KW-0002">3D-structure</keyword>
<keyword id="KW-0067">ATP-binding</keyword>
<keyword id="KW-0131">Cell cycle</keyword>
<keyword id="KW-0132">Cell division</keyword>
<keyword id="KW-0227">DNA damage</keyword>
<keyword id="KW-0233">DNA recombination</keyword>
<keyword id="KW-0234">DNA repair</keyword>
<keyword id="KW-0436">Ligase</keyword>
<keyword id="KW-0460">Magnesium</keyword>
<keyword id="KW-0479">Metal-binding</keyword>
<keyword id="KW-0547">Nucleotide-binding</keyword>
<keyword id="KW-0539">Nucleus</keyword>
<keyword id="KW-1185">Reference proteome</keyword>
<keyword id="KW-0677">Repeat</keyword>
<proteinExistence type="evidence at protein level"/>
<organism>
    <name type="scientific">Saccharomyces cerevisiae (strain ATCC 204508 / S288c)</name>
    <name type="common">Baker's yeast</name>
    <dbReference type="NCBI Taxonomy" id="559292"/>
    <lineage>
        <taxon>Eukaryota</taxon>
        <taxon>Fungi</taxon>
        <taxon>Dikarya</taxon>
        <taxon>Ascomycota</taxon>
        <taxon>Saccharomycotina</taxon>
        <taxon>Saccharomycetes</taxon>
        <taxon>Saccharomycetales</taxon>
        <taxon>Saccharomycetaceae</taxon>
        <taxon>Saccharomyces</taxon>
    </lineage>
</organism>